<dbReference type="EC" id="3.4.21.88" evidence="1"/>
<dbReference type="EMBL" id="CU234118">
    <property type="protein sequence ID" value="CAL77872.1"/>
    <property type="molecule type" value="Genomic_DNA"/>
</dbReference>
<dbReference type="RefSeq" id="WP_008960206.1">
    <property type="nucleotide sequence ID" value="NC_009445.1"/>
</dbReference>
<dbReference type="SMR" id="A4YVE6"/>
<dbReference type="STRING" id="114615.BRADO4120"/>
<dbReference type="MEROPS" id="S24.001"/>
<dbReference type="KEGG" id="bra:BRADO4120"/>
<dbReference type="eggNOG" id="COG1974">
    <property type="taxonomic scope" value="Bacteria"/>
</dbReference>
<dbReference type="HOGENOM" id="CLU_066192_45_2_5"/>
<dbReference type="OrthoDB" id="9802364at2"/>
<dbReference type="Proteomes" id="UP000001994">
    <property type="component" value="Chromosome"/>
</dbReference>
<dbReference type="GO" id="GO:0003677">
    <property type="term" value="F:DNA binding"/>
    <property type="evidence" value="ECO:0007669"/>
    <property type="project" value="UniProtKB-UniRule"/>
</dbReference>
<dbReference type="GO" id="GO:0004252">
    <property type="term" value="F:serine-type endopeptidase activity"/>
    <property type="evidence" value="ECO:0007669"/>
    <property type="project" value="UniProtKB-UniRule"/>
</dbReference>
<dbReference type="GO" id="GO:0006281">
    <property type="term" value="P:DNA repair"/>
    <property type="evidence" value="ECO:0007669"/>
    <property type="project" value="UniProtKB-UniRule"/>
</dbReference>
<dbReference type="GO" id="GO:0006260">
    <property type="term" value="P:DNA replication"/>
    <property type="evidence" value="ECO:0007669"/>
    <property type="project" value="UniProtKB-UniRule"/>
</dbReference>
<dbReference type="GO" id="GO:0045892">
    <property type="term" value="P:negative regulation of DNA-templated transcription"/>
    <property type="evidence" value="ECO:0007669"/>
    <property type="project" value="UniProtKB-UniRule"/>
</dbReference>
<dbReference type="GO" id="GO:0006508">
    <property type="term" value="P:proteolysis"/>
    <property type="evidence" value="ECO:0007669"/>
    <property type="project" value="InterPro"/>
</dbReference>
<dbReference type="GO" id="GO:0009432">
    <property type="term" value="P:SOS response"/>
    <property type="evidence" value="ECO:0007669"/>
    <property type="project" value="UniProtKB-UniRule"/>
</dbReference>
<dbReference type="CDD" id="cd06529">
    <property type="entry name" value="S24_LexA-like"/>
    <property type="match status" value="1"/>
</dbReference>
<dbReference type="FunFam" id="1.10.10.10:FF:000102">
    <property type="entry name" value="LexA repressor"/>
    <property type="match status" value="1"/>
</dbReference>
<dbReference type="FunFam" id="2.10.109.10:FF:000001">
    <property type="entry name" value="LexA repressor"/>
    <property type="match status" value="1"/>
</dbReference>
<dbReference type="Gene3D" id="2.10.109.10">
    <property type="entry name" value="Umud Fragment, subunit A"/>
    <property type="match status" value="1"/>
</dbReference>
<dbReference type="Gene3D" id="1.10.10.10">
    <property type="entry name" value="Winged helix-like DNA-binding domain superfamily/Winged helix DNA-binding domain"/>
    <property type="match status" value="1"/>
</dbReference>
<dbReference type="HAMAP" id="MF_00015">
    <property type="entry name" value="LexA"/>
    <property type="match status" value="1"/>
</dbReference>
<dbReference type="InterPro" id="IPR006200">
    <property type="entry name" value="LexA"/>
</dbReference>
<dbReference type="InterPro" id="IPR039418">
    <property type="entry name" value="LexA-like"/>
</dbReference>
<dbReference type="InterPro" id="IPR036286">
    <property type="entry name" value="LexA/Signal_pep-like_sf"/>
</dbReference>
<dbReference type="InterPro" id="IPR006199">
    <property type="entry name" value="LexA_DNA-bd_dom"/>
</dbReference>
<dbReference type="InterPro" id="IPR050077">
    <property type="entry name" value="LexA_repressor"/>
</dbReference>
<dbReference type="InterPro" id="IPR006197">
    <property type="entry name" value="Peptidase_S24_LexA"/>
</dbReference>
<dbReference type="InterPro" id="IPR015927">
    <property type="entry name" value="Peptidase_S24_S26A/B/C"/>
</dbReference>
<dbReference type="InterPro" id="IPR036388">
    <property type="entry name" value="WH-like_DNA-bd_sf"/>
</dbReference>
<dbReference type="InterPro" id="IPR036390">
    <property type="entry name" value="WH_DNA-bd_sf"/>
</dbReference>
<dbReference type="NCBIfam" id="TIGR00498">
    <property type="entry name" value="lexA"/>
    <property type="match status" value="1"/>
</dbReference>
<dbReference type="PANTHER" id="PTHR33516">
    <property type="entry name" value="LEXA REPRESSOR"/>
    <property type="match status" value="1"/>
</dbReference>
<dbReference type="PANTHER" id="PTHR33516:SF2">
    <property type="entry name" value="LEXA REPRESSOR-RELATED"/>
    <property type="match status" value="1"/>
</dbReference>
<dbReference type="Pfam" id="PF01726">
    <property type="entry name" value="LexA_DNA_bind"/>
    <property type="match status" value="1"/>
</dbReference>
<dbReference type="Pfam" id="PF00717">
    <property type="entry name" value="Peptidase_S24"/>
    <property type="match status" value="1"/>
</dbReference>
<dbReference type="PRINTS" id="PR00726">
    <property type="entry name" value="LEXASERPTASE"/>
</dbReference>
<dbReference type="SUPFAM" id="SSF51306">
    <property type="entry name" value="LexA/Signal peptidase"/>
    <property type="match status" value="1"/>
</dbReference>
<dbReference type="SUPFAM" id="SSF46785">
    <property type="entry name" value="Winged helix' DNA-binding domain"/>
    <property type="match status" value="1"/>
</dbReference>
<sequence>MLTRKQYELLRFINERLKEAGVPPSFDEMKDALDLRSKSGIHRLITALEERGFIRRLPNRARAIEVIKLPELSQAAGNRRGFTPSVIEGNLGKVRTSTPALEDGERPVAVPVMGRIAAGTPIEALQTRSHTISVPADMLGNGDHYALEVRGDSMVDAGILDGDMALIQRNETADTGDIVVALIDDEEATLKRFRRRGASIALEPANTAYEVRILPPNRVKIQGKLVGLYRKY</sequence>
<protein>
    <recommendedName>
        <fullName evidence="1">LexA repressor</fullName>
        <ecNumber evidence="1">3.4.21.88</ecNumber>
    </recommendedName>
</protein>
<comment type="function">
    <text evidence="1">Represses a number of genes involved in the response to DNA damage (SOS response), including recA and lexA. In the presence of single-stranded DNA, RecA interacts with LexA causing an autocatalytic cleavage which disrupts the DNA-binding part of LexA, leading to derepression of the SOS regulon and eventually DNA repair.</text>
</comment>
<comment type="catalytic activity">
    <reaction evidence="1">
        <text>Hydrolysis of Ala-|-Gly bond in repressor LexA.</text>
        <dbReference type="EC" id="3.4.21.88"/>
    </reaction>
</comment>
<comment type="subunit">
    <text evidence="1">Homodimer.</text>
</comment>
<comment type="similarity">
    <text evidence="1">Belongs to the peptidase S24 family.</text>
</comment>
<name>LEXA_BRASO</name>
<feature type="chain" id="PRO_1000001262" description="LexA repressor">
    <location>
        <begin position="1"/>
        <end position="232"/>
    </location>
</feature>
<feature type="DNA-binding region" description="H-T-H motif" evidence="1">
    <location>
        <begin position="26"/>
        <end position="46"/>
    </location>
</feature>
<feature type="active site" description="For autocatalytic cleavage activity" evidence="1">
    <location>
        <position position="153"/>
    </location>
</feature>
<feature type="active site" description="For autocatalytic cleavage activity" evidence="1">
    <location>
        <position position="191"/>
    </location>
</feature>
<feature type="site" description="Cleavage; by autolysis" evidence="1">
    <location>
        <begin position="118"/>
        <end position="119"/>
    </location>
</feature>
<proteinExistence type="inferred from homology"/>
<gene>
    <name evidence="1" type="primary">lexA</name>
    <name type="ordered locus">BRADO4120</name>
</gene>
<keyword id="KW-0068">Autocatalytic cleavage</keyword>
<keyword id="KW-0227">DNA damage</keyword>
<keyword id="KW-0234">DNA repair</keyword>
<keyword id="KW-0235">DNA replication</keyword>
<keyword id="KW-0238">DNA-binding</keyword>
<keyword id="KW-0378">Hydrolase</keyword>
<keyword id="KW-1185">Reference proteome</keyword>
<keyword id="KW-0678">Repressor</keyword>
<keyword id="KW-0742">SOS response</keyword>
<keyword id="KW-0804">Transcription</keyword>
<keyword id="KW-0805">Transcription regulation</keyword>
<organism>
    <name type="scientific">Bradyrhizobium sp. (strain ORS 278)</name>
    <dbReference type="NCBI Taxonomy" id="114615"/>
    <lineage>
        <taxon>Bacteria</taxon>
        <taxon>Pseudomonadati</taxon>
        <taxon>Pseudomonadota</taxon>
        <taxon>Alphaproteobacteria</taxon>
        <taxon>Hyphomicrobiales</taxon>
        <taxon>Nitrobacteraceae</taxon>
        <taxon>Bradyrhizobium</taxon>
    </lineage>
</organism>
<evidence type="ECO:0000255" key="1">
    <source>
        <dbReference type="HAMAP-Rule" id="MF_00015"/>
    </source>
</evidence>
<accession>A4YVE6</accession>
<reference key="1">
    <citation type="journal article" date="2007" name="Science">
        <title>Legumes symbioses: absence of nod genes in photosynthetic bradyrhizobia.</title>
        <authorList>
            <person name="Giraud E."/>
            <person name="Moulin L."/>
            <person name="Vallenet D."/>
            <person name="Barbe V."/>
            <person name="Cytryn E."/>
            <person name="Avarre J.-C."/>
            <person name="Jaubert M."/>
            <person name="Simon D."/>
            <person name="Cartieaux F."/>
            <person name="Prin Y."/>
            <person name="Bena G."/>
            <person name="Hannibal L."/>
            <person name="Fardoux J."/>
            <person name="Kojadinovic M."/>
            <person name="Vuillet L."/>
            <person name="Lajus A."/>
            <person name="Cruveiller S."/>
            <person name="Rouy Z."/>
            <person name="Mangenot S."/>
            <person name="Segurens B."/>
            <person name="Dossat C."/>
            <person name="Franck W.L."/>
            <person name="Chang W.-S."/>
            <person name="Saunders E."/>
            <person name="Bruce D."/>
            <person name="Richardson P."/>
            <person name="Normand P."/>
            <person name="Dreyfus B."/>
            <person name="Pignol D."/>
            <person name="Stacey G."/>
            <person name="Emerich D."/>
            <person name="Vermeglio A."/>
            <person name="Medigue C."/>
            <person name="Sadowsky M."/>
        </authorList>
    </citation>
    <scope>NUCLEOTIDE SEQUENCE [LARGE SCALE GENOMIC DNA]</scope>
    <source>
        <strain>ORS 278</strain>
    </source>
</reference>